<keyword id="KW-0963">Cytoplasm</keyword>
<keyword id="KW-0489">Methyltransferase</keyword>
<keyword id="KW-1185">Reference proteome</keyword>
<keyword id="KW-0698">rRNA processing</keyword>
<keyword id="KW-0949">S-adenosyl-L-methionine</keyword>
<keyword id="KW-0808">Transferase</keyword>
<dbReference type="EC" id="2.1.1.177" evidence="1"/>
<dbReference type="EMBL" id="CP000115">
    <property type="protein sequence ID" value="ABA03714.1"/>
    <property type="molecule type" value="Genomic_DNA"/>
</dbReference>
<dbReference type="RefSeq" id="WP_011313778.1">
    <property type="nucleotide sequence ID" value="NC_007406.1"/>
</dbReference>
<dbReference type="SMR" id="Q3SVH7"/>
<dbReference type="STRING" id="323098.Nwi_0447"/>
<dbReference type="KEGG" id="nwi:Nwi_0447"/>
<dbReference type="eggNOG" id="COG1576">
    <property type="taxonomic scope" value="Bacteria"/>
</dbReference>
<dbReference type="HOGENOM" id="CLU_100552_1_1_5"/>
<dbReference type="OrthoDB" id="9806643at2"/>
<dbReference type="Proteomes" id="UP000002531">
    <property type="component" value="Chromosome"/>
</dbReference>
<dbReference type="GO" id="GO:0005737">
    <property type="term" value="C:cytoplasm"/>
    <property type="evidence" value="ECO:0007669"/>
    <property type="project" value="UniProtKB-SubCell"/>
</dbReference>
<dbReference type="GO" id="GO:0070038">
    <property type="term" value="F:rRNA (pseudouridine-N3-)-methyltransferase activity"/>
    <property type="evidence" value="ECO:0007669"/>
    <property type="project" value="UniProtKB-UniRule"/>
</dbReference>
<dbReference type="CDD" id="cd18081">
    <property type="entry name" value="RlmH-like"/>
    <property type="match status" value="1"/>
</dbReference>
<dbReference type="Gene3D" id="3.40.1280.10">
    <property type="match status" value="1"/>
</dbReference>
<dbReference type="HAMAP" id="MF_00658">
    <property type="entry name" value="23SrRNA_methyltr_H"/>
    <property type="match status" value="1"/>
</dbReference>
<dbReference type="InterPro" id="IPR029028">
    <property type="entry name" value="Alpha/beta_knot_MTases"/>
</dbReference>
<dbReference type="InterPro" id="IPR003742">
    <property type="entry name" value="RlmH-like"/>
</dbReference>
<dbReference type="InterPro" id="IPR029026">
    <property type="entry name" value="tRNA_m1G_MTases_N"/>
</dbReference>
<dbReference type="NCBIfam" id="NF000989">
    <property type="entry name" value="PRK00103.2-3"/>
    <property type="match status" value="1"/>
</dbReference>
<dbReference type="NCBIfam" id="NF000991">
    <property type="entry name" value="PRK00103.2-5"/>
    <property type="match status" value="1"/>
</dbReference>
<dbReference type="PANTHER" id="PTHR33603">
    <property type="entry name" value="METHYLTRANSFERASE"/>
    <property type="match status" value="1"/>
</dbReference>
<dbReference type="PANTHER" id="PTHR33603:SF1">
    <property type="entry name" value="RIBOSOMAL RNA LARGE SUBUNIT METHYLTRANSFERASE H"/>
    <property type="match status" value="1"/>
</dbReference>
<dbReference type="Pfam" id="PF02590">
    <property type="entry name" value="SPOUT_MTase"/>
    <property type="match status" value="1"/>
</dbReference>
<dbReference type="PIRSF" id="PIRSF004505">
    <property type="entry name" value="MT_bac"/>
    <property type="match status" value="1"/>
</dbReference>
<dbReference type="SUPFAM" id="SSF75217">
    <property type="entry name" value="alpha/beta knot"/>
    <property type="match status" value="1"/>
</dbReference>
<gene>
    <name evidence="1" type="primary">rlmH</name>
    <name type="ordered locus">Nwi_0447</name>
</gene>
<protein>
    <recommendedName>
        <fullName evidence="1">Ribosomal RNA large subunit methyltransferase H</fullName>
        <ecNumber evidence="1">2.1.1.177</ecNumber>
    </recommendedName>
    <alternativeName>
        <fullName evidence="1">23S rRNA (pseudouridine1915-N3)-methyltransferase</fullName>
    </alternativeName>
    <alternativeName>
        <fullName evidence="1">23S rRNA m3Psi1915 methyltransferase</fullName>
    </alternativeName>
    <alternativeName>
        <fullName evidence="1">rRNA (pseudouridine-N3-)-methyltransferase RlmH</fullName>
    </alternativeName>
</protein>
<proteinExistence type="inferred from homology"/>
<reference key="1">
    <citation type="journal article" date="2006" name="Appl. Environ. Microbiol.">
        <title>Genome sequence of the chemolithoautotrophic nitrite-oxidizing bacterium Nitrobacter winogradskyi Nb-255.</title>
        <authorList>
            <person name="Starkenburg S.R."/>
            <person name="Chain P.S.G."/>
            <person name="Sayavedra-Soto L.A."/>
            <person name="Hauser L."/>
            <person name="Land M.L."/>
            <person name="Larimer F.W."/>
            <person name="Malfatti S.A."/>
            <person name="Klotz M.G."/>
            <person name="Bottomley P.J."/>
            <person name="Arp D.J."/>
            <person name="Hickey W.J."/>
        </authorList>
    </citation>
    <scope>NUCLEOTIDE SEQUENCE [LARGE SCALE GENOMIC DNA]</scope>
    <source>
        <strain>ATCC 25391 / DSM 10237 / CIP 104748 / NCIMB 11846 / Nb-255</strain>
    </source>
</reference>
<organism>
    <name type="scientific">Nitrobacter winogradskyi (strain ATCC 25391 / DSM 10237 / CIP 104748 / NCIMB 11846 / Nb-255)</name>
    <dbReference type="NCBI Taxonomy" id="323098"/>
    <lineage>
        <taxon>Bacteria</taxon>
        <taxon>Pseudomonadati</taxon>
        <taxon>Pseudomonadota</taxon>
        <taxon>Alphaproteobacteria</taxon>
        <taxon>Hyphomicrobiales</taxon>
        <taxon>Nitrobacteraceae</taxon>
        <taxon>Nitrobacter</taxon>
    </lineage>
</organism>
<accession>Q3SVH7</accession>
<comment type="function">
    <text evidence="1">Specifically methylates the pseudouridine at position 1915 (m3Psi1915) in 23S rRNA.</text>
</comment>
<comment type="catalytic activity">
    <reaction evidence="1">
        <text>pseudouridine(1915) in 23S rRNA + S-adenosyl-L-methionine = N(3)-methylpseudouridine(1915) in 23S rRNA + S-adenosyl-L-homocysteine + H(+)</text>
        <dbReference type="Rhea" id="RHEA:42752"/>
        <dbReference type="Rhea" id="RHEA-COMP:10221"/>
        <dbReference type="Rhea" id="RHEA-COMP:10222"/>
        <dbReference type="ChEBI" id="CHEBI:15378"/>
        <dbReference type="ChEBI" id="CHEBI:57856"/>
        <dbReference type="ChEBI" id="CHEBI:59789"/>
        <dbReference type="ChEBI" id="CHEBI:65314"/>
        <dbReference type="ChEBI" id="CHEBI:74486"/>
        <dbReference type="EC" id="2.1.1.177"/>
    </reaction>
</comment>
<comment type="subunit">
    <text evidence="1">Homodimer.</text>
</comment>
<comment type="subcellular location">
    <subcellularLocation>
        <location evidence="1">Cytoplasm</location>
    </subcellularLocation>
</comment>
<comment type="similarity">
    <text evidence="1">Belongs to the RNA methyltransferase RlmH family.</text>
</comment>
<evidence type="ECO:0000255" key="1">
    <source>
        <dbReference type="HAMAP-Rule" id="MF_00658"/>
    </source>
</evidence>
<sequence>MRLVVIAVGRLKQGPERELADRYRGRFADIGRNLGFRGLDVHEVAESRARDAGQRIREEAAAVLALAPKEMILVALDEKGKSIDSAAFAEHLGRWRDESVADAVFMIGGADGLSPELRRRARLSVAFGAATWPHQMVRVMLLEQIYRAATILAGHPYHRG</sequence>
<feature type="chain" id="PRO_0000260576" description="Ribosomal RNA large subunit methyltransferase H">
    <location>
        <begin position="1"/>
        <end position="160"/>
    </location>
</feature>
<feature type="binding site" evidence="1">
    <location>
        <position position="76"/>
    </location>
    <ligand>
        <name>S-adenosyl-L-methionine</name>
        <dbReference type="ChEBI" id="CHEBI:59789"/>
    </ligand>
</feature>
<feature type="binding site" evidence="1">
    <location>
        <position position="108"/>
    </location>
    <ligand>
        <name>S-adenosyl-L-methionine</name>
        <dbReference type="ChEBI" id="CHEBI:59789"/>
    </ligand>
</feature>
<name>RLMH_NITWN</name>